<reference key="1">
    <citation type="journal article" date="2009" name="PLoS Genet.">
        <title>Organised genome dynamics in the Escherichia coli species results in highly diverse adaptive paths.</title>
        <authorList>
            <person name="Touchon M."/>
            <person name="Hoede C."/>
            <person name="Tenaillon O."/>
            <person name="Barbe V."/>
            <person name="Baeriswyl S."/>
            <person name="Bidet P."/>
            <person name="Bingen E."/>
            <person name="Bonacorsi S."/>
            <person name="Bouchier C."/>
            <person name="Bouvet O."/>
            <person name="Calteau A."/>
            <person name="Chiapello H."/>
            <person name="Clermont O."/>
            <person name="Cruveiller S."/>
            <person name="Danchin A."/>
            <person name="Diard M."/>
            <person name="Dossat C."/>
            <person name="Karoui M.E."/>
            <person name="Frapy E."/>
            <person name="Garry L."/>
            <person name="Ghigo J.M."/>
            <person name="Gilles A.M."/>
            <person name="Johnson J."/>
            <person name="Le Bouguenec C."/>
            <person name="Lescat M."/>
            <person name="Mangenot S."/>
            <person name="Martinez-Jehanne V."/>
            <person name="Matic I."/>
            <person name="Nassif X."/>
            <person name="Oztas S."/>
            <person name="Petit M.A."/>
            <person name="Pichon C."/>
            <person name="Rouy Z."/>
            <person name="Ruf C.S."/>
            <person name="Schneider D."/>
            <person name="Tourret J."/>
            <person name="Vacherie B."/>
            <person name="Vallenet D."/>
            <person name="Medigue C."/>
            <person name="Rocha E.P.C."/>
            <person name="Denamur E."/>
        </authorList>
    </citation>
    <scope>NUCLEOTIDE SEQUENCE [LARGE SCALE GENOMIC DNA]</scope>
    <source>
        <strain>IAI39 / ExPEC</strain>
    </source>
</reference>
<organism>
    <name type="scientific">Escherichia coli O7:K1 (strain IAI39 / ExPEC)</name>
    <dbReference type="NCBI Taxonomy" id="585057"/>
    <lineage>
        <taxon>Bacteria</taxon>
        <taxon>Pseudomonadati</taxon>
        <taxon>Pseudomonadota</taxon>
        <taxon>Gammaproteobacteria</taxon>
        <taxon>Enterobacterales</taxon>
        <taxon>Enterobacteriaceae</taxon>
        <taxon>Escherichia</taxon>
    </lineage>
</organism>
<name>CAIC_ECO7I</name>
<proteinExistence type="inferred from homology"/>
<feature type="chain" id="PRO_0000383400" description="Crotonobetaine/carnitine--CoA ligase">
    <location>
        <begin position="1"/>
        <end position="517"/>
    </location>
</feature>
<comment type="function">
    <text evidence="1">Catalyzes the transfer of CoA to carnitine, generating the initial carnitinyl-CoA needed for the CaiB reaction cycle. Also has activity toward crotonobetaine and gamma-butyrobetaine.</text>
</comment>
<comment type="catalytic activity">
    <reaction evidence="1">
        <text>4-(trimethylamino)butanoate + ATP + CoA = 4-(trimethylamino)butanoyl-CoA + AMP + diphosphate</text>
        <dbReference type="Rhea" id="RHEA:55960"/>
        <dbReference type="ChEBI" id="CHEBI:16244"/>
        <dbReference type="ChEBI" id="CHEBI:30616"/>
        <dbReference type="ChEBI" id="CHEBI:33019"/>
        <dbReference type="ChEBI" id="CHEBI:57287"/>
        <dbReference type="ChEBI" id="CHEBI:61513"/>
        <dbReference type="ChEBI" id="CHEBI:456215"/>
        <dbReference type="EC" id="6.2.1.48"/>
    </reaction>
</comment>
<comment type="catalytic activity">
    <reaction evidence="1">
        <text>crotonobetaine + ATP + CoA = crotonobetainyl-CoA + AMP + diphosphate</text>
        <dbReference type="Rhea" id="RHEA:30079"/>
        <dbReference type="ChEBI" id="CHEBI:17237"/>
        <dbReference type="ChEBI" id="CHEBI:30616"/>
        <dbReference type="ChEBI" id="CHEBI:33019"/>
        <dbReference type="ChEBI" id="CHEBI:57287"/>
        <dbReference type="ChEBI" id="CHEBI:60933"/>
        <dbReference type="ChEBI" id="CHEBI:456215"/>
        <dbReference type="EC" id="6.2.1.48"/>
    </reaction>
</comment>
<comment type="catalytic activity">
    <reaction evidence="1">
        <text>(R)-carnitine + ATP + CoA = (R)-carnitinyl-CoA + AMP + diphosphate</text>
        <dbReference type="Rhea" id="RHEA:28514"/>
        <dbReference type="ChEBI" id="CHEBI:16347"/>
        <dbReference type="ChEBI" id="CHEBI:30616"/>
        <dbReference type="ChEBI" id="CHEBI:33019"/>
        <dbReference type="ChEBI" id="CHEBI:57287"/>
        <dbReference type="ChEBI" id="CHEBI:60932"/>
        <dbReference type="ChEBI" id="CHEBI:456215"/>
        <dbReference type="EC" id="6.2.1.48"/>
    </reaction>
</comment>
<comment type="pathway">
    <text evidence="1">Amine and polyamine metabolism; carnitine metabolism.</text>
</comment>
<comment type="similarity">
    <text evidence="1">Belongs to the ATP-dependent AMP-binding enzyme family.</text>
</comment>
<comment type="sequence caution" evidence="2">
    <conflict type="erroneous initiation">
        <sequence resource="EMBL-CDS" id="CAR16179"/>
    </conflict>
</comment>
<accession>B7NHE1</accession>
<evidence type="ECO:0000255" key="1">
    <source>
        <dbReference type="HAMAP-Rule" id="MF_01524"/>
    </source>
</evidence>
<evidence type="ECO:0000305" key="2"/>
<protein>
    <recommendedName>
        <fullName evidence="1">Crotonobetaine/carnitine--CoA ligase</fullName>
        <ecNumber evidence="1">6.2.1.48</ecNumber>
    </recommendedName>
</protein>
<keyword id="KW-0436">Ligase</keyword>
<gene>
    <name evidence="1" type="primary">caiC</name>
    <name type="ordered locus">ECIAI39_0038</name>
</gene>
<dbReference type="EC" id="6.2.1.48" evidence="1"/>
<dbReference type="EMBL" id="CU928164">
    <property type="protein sequence ID" value="CAR16179.1"/>
    <property type="status" value="ALT_INIT"/>
    <property type="molecule type" value="Genomic_DNA"/>
</dbReference>
<dbReference type="RefSeq" id="WP_024190516.1">
    <property type="nucleotide sequence ID" value="NC_011750.1"/>
</dbReference>
<dbReference type="RefSeq" id="YP_002406086.1">
    <property type="nucleotide sequence ID" value="NC_011750.1"/>
</dbReference>
<dbReference type="SMR" id="B7NHE1"/>
<dbReference type="STRING" id="585057.ECIAI39_0038"/>
<dbReference type="KEGG" id="ect:ECIAI39_0038"/>
<dbReference type="PATRIC" id="fig|585057.6.peg.40"/>
<dbReference type="HOGENOM" id="CLU_000022_59_0_6"/>
<dbReference type="UniPathway" id="UPA00117"/>
<dbReference type="Proteomes" id="UP000000749">
    <property type="component" value="Chromosome"/>
</dbReference>
<dbReference type="GO" id="GO:0051108">
    <property type="term" value="F:carnitine-CoA ligase activity"/>
    <property type="evidence" value="ECO:0007669"/>
    <property type="project" value="InterPro"/>
</dbReference>
<dbReference type="GO" id="GO:0051109">
    <property type="term" value="F:crotonobetaine-CoA ligase activity"/>
    <property type="evidence" value="ECO:0007669"/>
    <property type="project" value="InterPro"/>
</dbReference>
<dbReference type="GO" id="GO:0031956">
    <property type="term" value="F:medium-chain fatty acid-CoA ligase activity"/>
    <property type="evidence" value="ECO:0007669"/>
    <property type="project" value="TreeGrafter"/>
</dbReference>
<dbReference type="GO" id="GO:0009437">
    <property type="term" value="P:carnitine metabolic process"/>
    <property type="evidence" value="ECO:0007669"/>
    <property type="project" value="UniProtKB-UniRule"/>
</dbReference>
<dbReference type="GO" id="GO:0006631">
    <property type="term" value="P:fatty acid metabolic process"/>
    <property type="evidence" value="ECO:0007669"/>
    <property type="project" value="TreeGrafter"/>
</dbReference>
<dbReference type="CDD" id="cd05934">
    <property type="entry name" value="FACL_DitJ_like"/>
    <property type="match status" value="1"/>
</dbReference>
<dbReference type="FunFam" id="3.30.300.30:FF:000011">
    <property type="entry name" value="Crotonobetaine/carnitine--CoA ligase"/>
    <property type="match status" value="1"/>
</dbReference>
<dbReference type="FunFam" id="3.40.50.12780:FF:000017">
    <property type="entry name" value="Crotonobetaine/carnitine--CoA ligase"/>
    <property type="match status" value="1"/>
</dbReference>
<dbReference type="Gene3D" id="3.30.300.30">
    <property type="match status" value="1"/>
</dbReference>
<dbReference type="Gene3D" id="3.40.50.12780">
    <property type="entry name" value="N-terminal domain of ligase-like"/>
    <property type="match status" value="1"/>
</dbReference>
<dbReference type="HAMAP" id="MF_01524">
    <property type="entry name" value="CaiC"/>
    <property type="match status" value="1"/>
</dbReference>
<dbReference type="InterPro" id="IPR025110">
    <property type="entry name" value="AMP-bd_C"/>
</dbReference>
<dbReference type="InterPro" id="IPR045851">
    <property type="entry name" value="AMP-bd_C_sf"/>
</dbReference>
<dbReference type="InterPro" id="IPR020845">
    <property type="entry name" value="AMP-binding_CS"/>
</dbReference>
<dbReference type="InterPro" id="IPR000873">
    <property type="entry name" value="AMP-dep_synth/lig_dom"/>
</dbReference>
<dbReference type="InterPro" id="IPR042099">
    <property type="entry name" value="ANL_N_sf"/>
</dbReference>
<dbReference type="InterPro" id="IPR023456">
    <property type="entry name" value="CaiC"/>
</dbReference>
<dbReference type="NCBIfam" id="NF005947">
    <property type="entry name" value="PRK08008.1"/>
    <property type="match status" value="1"/>
</dbReference>
<dbReference type="PANTHER" id="PTHR43201">
    <property type="entry name" value="ACYL-COA SYNTHETASE"/>
    <property type="match status" value="1"/>
</dbReference>
<dbReference type="PANTHER" id="PTHR43201:SF5">
    <property type="entry name" value="MEDIUM-CHAIN ACYL-COA LIGASE ACSF2, MITOCHONDRIAL"/>
    <property type="match status" value="1"/>
</dbReference>
<dbReference type="Pfam" id="PF00501">
    <property type="entry name" value="AMP-binding"/>
    <property type="match status" value="1"/>
</dbReference>
<dbReference type="Pfam" id="PF13193">
    <property type="entry name" value="AMP-binding_C"/>
    <property type="match status" value="1"/>
</dbReference>
<dbReference type="SUPFAM" id="SSF56801">
    <property type="entry name" value="Acetyl-CoA synthetase-like"/>
    <property type="match status" value="1"/>
</dbReference>
<dbReference type="PROSITE" id="PS00455">
    <property type="entry name" value="AMP_BINDING"/>
    <property type="match status" value="1"/>
</dbReference>
<sequence length="517" mass="58440">MDIIGGQHLRQMWDDLADVYGHKTALICESSGGVVNRYSYLELNQEINRTANLFYTLGIRKGDKVALHLDNCPEFIFCWFGLAKIGAIMVPINARLLREESAWILQNSQACLLVTSAQFYPMYQQIQQEDATQLRHICLTDVALPADDGVSSFTQLKNQQPATLCYAPPLSTDDTAEILFTSGTTSRPKGVVITHYNLRFAGYYSAWQCALRDDDVYLTVMPAFHIDCQCTAAMAAFSAGATFVLVEKYSARAFWGQVQKYRATITECIPMMIRTLMVQPPSANDQQHRLREVMFYLNLSAQEKDAFCERFGVRLLTSYGMTETIVGIIGDRPGDKRRWPSIGRAGFCYEAEIRDDHNRPLPAGEIGEICIKGVPGKTIFKEYFLNPKATAKVLEADGWLHTGDTGYRDEEGFFYFADRRCNMIKRGGENVSCVELENIIAAHPKIQDIVVVGIKDSIRDEAIKAFVVLNEGETLSEEEFFRFCEQNMAKFKVPSYLEIRKDLPRNCSGKIIRKNLK</sequence>